<organism>
    <name type="scientific">Dictyostelium discoideum</name>
    <name type="common">Social amoeba</name>
    <dbReference type="NCBI Taxonomy" id="44689"/>
    <lineage>
        <taxon>Eukaryota</taxon>
        <taxon>Amoebozoa</taxon>
        <taxon>Evosea</taxon>
        <taxon>Eumycetozoa</taxon>
        <taxon>Dictyostelia</taxon>
        <taxon>Dictyosteliales</taxon>
        <taxon>Dictyosteliaceae</taxon>
        <taxon>Dictyostelium</taxon>
    </lineage>
</organism>
<reference key="1">
    <citation type="journal article" date="2005" name="Nature">
        <title>The genome of the social amoeba Dictyostelium discoideum.</title>
        <authorList>
            <person name="Eichinger L."/>
            <person name="Pachebat J.A."/>
            <person name="Gloeckner G."/>
            <person name="Rajandream M.A."/>
            <person name="Sucgang R."/>
            <person name="Berriman M."/>
            <person name="Song J."/>
            <person name="Olsen R."/>
            <person name="Szafranski K."/>
            <person name="Xu Q."/>
            <person name="Tunggal B."/>
            <person name="Kummerfeld S."/>
            <person name="Madera M."/>
            <person name="Konfortov B.A."/>
            <person name="Rivero F."/>
            <person name="Bankier A.T."/>
            <person name="Lehmann R."/>
            <person name="Hamlin N."/>
            <person name="Davies R."/>
            <person name="Gaudet P."/>
            <person name="Fey P."/>
            <person name="Pilcher K."/>
            <person name="Chen G."/>
            <person name="Saunders D."/>
            <person name="Sodergren E.J."/>
            <person name="Davis P."/>
            <person name="Kerhornou A."/>
            <person name="Nie X."/>
            <person name="Hall N."/>
            <person name="Anjard C."/>
            <person name="Hemphill L."/>
            <person name="Bason N."/>
            <person name="Farbrother P."/>
            <person name="Desany B."/>
            <person name="Just E."/>
            <person name="Morio T."/>
            <person name="Rost R."/>
            <person name="Churcher C.M."/>
            <person name="Cooper J."/>
            <person name="Haydock S."/>
            <person name="van Driessche N."/>
            <person name="Cronin A."/>
            <person name="Goodhead I."/>
            <person name="Muzny D.M."/>
            <person name="Mourier T."/>
            <person name="Pain A."/>
            <person name="Lu M."/>
            <person name="Harper D."/>
            <person name="Lindsay R."/>
            <person name="Hauser H."/>
            <person name="James K.D."/>
            <person name="Quiles M."/>
            <person name="Madan Babu M."/>
            <person name="Saito T."/>
            <person name="Buchrieser C."/>
            <person name="Wardroper A."/>
            <person name="Felder M."/>
            <person name="Thangavelu M."/>
            <person name="Johnson D."/>
            <person name="Knights A."/>
            <person name="Loulseged H."/>
            <person name="Mungall K.L."/>
            <person name="Oliver K."/>
            <person name="Price C."/>
            <person name="Quail M.A."/>
            <person name="Urushihara H."/>
            <person name="Hernandez J."/>
            <person name="Rabbinowitsch E."/>
            <person name="Steffen D."/>
            <person name="Sanders M."/>
            <person name="Ma J."/>
            <person name="Kohara Y."/>
            <person name="Sharp S."/>
            <person name="Simmonds M.N."/>
            <person name="Spiegler S."/>
            <person name="Tivey A."/>
            <person name="Sugano S."/>
            <person name="White B."/>
            <person name="Walker D."/>
            <person name="Woodward J.R."/>
            <person name="Winckler T."/>
            <person name="Tanaka Y."/>
            <person name="Shaulsky G."/>
            <person name="Schleicher M."/>
            <person name="Weinstock G.M."/>
            <person name="Rosenthal A."/>
            <person name="Cox E.C."/>
            <person name="Chisholm R.L."/>
            <person name="Gibbs R.A."/>
            <person name="Loomis W.F."/>
            <person name="Platzer M."/>
            <person name="Kay R.R."/>
            <person name="Williams J.G."/>
            <person name="Dear P.H."/>
            <person name="Noegel A.A."/>
            <person name="Barrell B.G."/>
            <person name="Kuspa A."/>
        </authorList>
    </citation>
    <scope>NUCLEOTIDE SEQUENCE [LARGE SCALE GENOMIC DNA]</scope>
    <source>
        <strain>AX4</strain>
    </source>
</reference>
<feature type="chain" id="PRO_0000328129" description="Electron transfer flavoprotein subunit beta">
    <location>
        <begin position="1"/>
        <end position="250"/>
    </location>
</feature>
<keyword id="KW-0249">Electron transport</keyword>
<keyword id="KW-0274">FAD</keyword>
<keyword id="KW-0285">Flavoprotein</keyword>
<keyword id="KW-0496">Mitochondrion</keyword>
<keyword id="KW-1185">Reference proteome</keyword>
<keyword id="KW-0813">Transport</keyword>
<proteinExistence type="inferred from homology"/>
<comment type="function">
    <text evidence="1">The electron transfer flavoprotein serves as a specific electron acceptor for several dehydrogenases, including five acyl-CoA dehydrogenases, glutaryl-CoA and sarcosine dehydrogenase. It transfers the electrons to the main mitochondrial respiratory chain via ETF-ubiquinone oxidoreductase (ETF dehydrogenase) (By similarity).</text>
</comment>
<comment type="cofactor">
    <cofactor evidence="1">
        <name>FAD</name>
        <dbReference type="ChEBI" id="CHEBI:57692"/>
    </cofactor>
    <text evidence="1">Binds 1 FAD per dimer.</text>
</comment>
<comment type="cofactor">
    <cofactor evidence="1">
        <name>AMP</name>
        <dbReference type="ChEBI" id="CHEBI:456215"/>
    </cofactor>
    <text evidence="1">Binds 1 AMP per subunit.</text>
</comment>
<comment type="subunit">
    <text evidence="1">Heterodimer of an alpha and a beta subunit.</text>
</comment>
<comment type="subcellular location">
    <subcellularLocation>
        <location evidence="1">Mitochondrion matrix</location>
    </subcellularLocation>
</comment>
<comment type="similarity">
    <text evidence="2">Belongs to the ETF beta-subunit/FixA family.</text>
</comment>
<evidence type="ECO:0000250" key="1"/>
<evidence type="ECO:0000305" key="2"/>
<name>ETFB_DICDI</name>
<protein>
    <recommendedName>
        <fullName>Electron transfer flavoprotein subunit beta</fullName>
        <shortName>Beta-ETF</shortName>
    </recommendedName>
</protein>
<dbReference type="EMBL" id="AAFI02000023">
    <property type="protein sequence ID" value="EAL68168.1"/>
    <property type="molecule type" value="Genomic_DNA"/>
</dbReference>
<dbReference type="RefSeq" id="XP_642058.1">
    <property type="nucleotide sequence ID" value="XM_636966.1"/>
</dbReference>
<dbReference type="SMR" id="Q54YZ4"/>
<dbReference type="FunCoup" id="Q54YZ4">
    <property type="interactions" value="425"/>
</dbReference>
<dbReference type="STRING" id="44689.Q54YZ4"/>
<dbReference type="PaxDb" id="44689-DDB0267018"/>
<dbReference type="EnsemblProtists" id="EAL68168">
    <property type="protein sequence ID" value="EAL68168"/>
    <property type="gene ID" value="DDB_G0277991"/>
</dbReference>
<dbReference type="GeneID" id="8621270"/>
<dbReference type="KEGG" id="ddi:DDB_G0277991"/>
<dbReference type="dictyBase" id="DDB_G0277991">
    <property type="gene designation" value="etfb"/>
</dbReference>
<dbReference type="VEuPathDB" id="AmoebaDB:DDB_G0277991"/>
<dbReference type="eggNOG" id="KOG3180">
    <property type="taxonomic scope" value="Eukaryota"/>
</dbReference>
<dbReference type="HOGENOM" id="CLU_060196_0_0_1"/>
<dbReference type="InParanoid" id="Q54YZ4"/>
<dbReference type="OMA" id="EINQPRI"/>
<dbReference type="PhylomeDB" id="Q54YZ4"/>
<dbReference type="Reactome" id="R-DDI-611105">
    <property type="pathway name" value="Respiratory electron transport"/>
</dbReference>
<dbReference type="PRO" id="PR:Q54YZ4"/>
<dbReference type="Proteomes" id="UP000002195">
    <property type="component" value="Chromosome 3"/>
</dbReference>
<dbReference type="GO" id="GO:0005759">
    <property type="term" value="C:mitochondrial matrix"/>
    <property type="evidence" value="ECO:0007669"/>
    <property type="project" value="UniProtKB-SubCell"/>
</dbReference>
<dbReference type="GO" id="GO:0005739">
    <property type="term" value="C:mitochondrion"/>
    <property type="evidence" value="ECO:0000318"/>
    <property type="project" value="GO_Central"/>
</dbReference>
<dbReference type="GO" id="GO:0009055">
    <property type="term" value="F:electron transfer activity"/>
    <property type="evidence" value="ECO:0000318"/>
    <property type="project" value="GO_Central"/>
</dbReference>
<dbReference type="GO" id="GO:0033539">
    <property type="term" value="P:fatty acid beta-oxidation using acyl-CoA dehydrogenase"/>
    <property type="evidence" value="ECO:0000318"/>
    <property type="project" value="GO_Central"/>
</dbReference>
<dbReference type="CDD" id="cd01714">
    <property type="entry name" value="ETF_beta"/>
    <property type="match status" value="1"/>
</dbReference>
<dbReference type="FunFam" id="3.40.50.620:FF:000011">
    <property type="entry name" value="Electron transfer flavoprotein subunit beta"/>
    <property type="match status" value="1"/>
</dbReference>
<dbReference type="Gene3D" id="3.40.50.620">
    <property type="entry name" value="HUPs"/>
    <property type="match status" value="1"/>
</dbReference>
<dbReference type="InterPro" id="IPR000049">
    <property type="entry name" value="ET-Flavoprotein_bsu_CS"/>
</dbReference>
<dbReference type="InterPro" id="IPR014730">
    <property type="entry name" value="ETF_a/b_N"/>
</dbReference>
<dbReference type="InterPro" id="IPR012255">
    <property type="entry name" value="ETF_b"/>
</dbReference>
<dbReference type="InterPro" id="IPR033948">
    <property type="entry name" value="ETF_beta_N"/>
</dbReference>
<dbReference type="InterPro" id="IPR014729">
    <property type="entry name" value="Rossmann-like_a/b/a_fold"/>
</dbReference>
<dbReference type="PANTHER" id="PTHR21294">
    <property type="entry name" value="ELECTRON TRANSFER FLAVOPROTEIN BETA-SUBUNIT"/>
    <property type="match status" value="1"/>
</dbReference>
<dbReference type="PANTHER" id="PTHR21294:SF8">
    <property type="entry name" value="ELECTRON TRANSFER FLAVOPROTEIN SUBUNIT BETA"/>
    <property type="match status" value="1"/>
</dbReference>
<dbReference type="Pfam" id="PF01012">
    <property type="entry name" value="ETF"/>
    <property type="match status" value="1"/>
</dbReference>
<dbReference type="PIRSF" id="PIRSF000090">
    <property type="entry name" value="Beta-ETF"/>
    <property type="match status" value="1"/>
</dbReference>
<dbReference type="SMART" id="SM00893">
    <property type="entry name" value="ETF"/>
    <property type="match status" value="1"/>
</dbReference>
<dbReference type="SUPFAM" id="SSF52402">
    <property type="entry name" value="Adenine nucleotide alpha hydrolases-like"/>
    <property type="match status" value="1"/>
</dbReference>
<dbReference type="PROSITE" id="PS01065">
    <property type="entry name" value="ETF_BETA"/>
    <property type="match status" value="1"/>
</dbReference>
<gene>
    <name type="primary">etfb</name>
    <name type="ORF">DDB_G0277991</name>
</gene>
<accession>Q54YZ4</accession>
<sequence>MSLKILVPIKRVVDYAVKIRVKGDKSGVETANVKMSMNPFDEIAVEEAIRIKEKNLAKEIIAVSMGPKTSQETIRTAIAMGADKGIHVETTAELQPLSVAKLLKELVDKEKPNLIILGKQAIDDDCNQTAQMLAGLLNWPQATFASKVDIKDDSVHVTREIDGGLETLSMKLPAIISCDLRLNEPRYAKLQNIMKSKKAELKVETPESLNVDTNCNLKIISVEEPPKRSGGVKVESVENVVEALKKHALI</sequence>